<organism>
    <name type="scientific">Nitratiruptor sp. (strain SB155-2)</name>
    <dbReference type="NCBI Taxonomy" id="387092"/>
    <lineage>
        <taxon>Bacteria</taxon>
        <taxon>Pseudomonadati</taxon>
        <taxon>Campylobacterota</taxon>
        <taxon>Epsilonproteobacteria</taxon>
        <taxon>Nautiliales</taxon>
        <taxon>Nitratiruptoraceae</taxon>
        <taxon>Nitratiruptor</taxon>
    </lineage>
</organism>
<evidence type="ECO:0000255" key="1">
    <source>
        <dbReference type="HAMAP-Rule" id="MF_00080"/>
    </source>
</evidence>
<comment type="function">
    <text evidence="1">IF-3 binds to the 30S ribosomal subunit and shifts the equilibrium between 70S ribosomes and their 50S and 30S subunits in favor of the free subunits, thus enhancing the availability of 30S subunits on which protein synthesis initiation begins.</text>
</comment>
<comment type="subunit">
    <text evidence="1">Monomer.</text>
</comment>
<comment type="subcellular location">
    <subcellularLocation>
        <location evidence="1">Cytoplasm</location>
    </subcellularLocation>
</comment>
<comment type="similarity">
    <text evidence="1">Belongs to the IF-3 family.</text>
</comment>
<name>IF3_NITSB</name>
<reference key="1">
    <citation type="journal article" date="2007" name="Proc. Natl. Acad. Sci. U.S.A.">
        <title>Deep-sea vent epsilon-proteobacterial genomes provide insights into emergence of pathogens.</title>
        <authorList>
            <person name="Nakagawa S."/>
            <person name="Takaki Y."/>
            <person name="Shimamura S."/>
            <person name="Reysenbach A.-L."/>
            <person name="Takai K."/>
            <person name="Horikoshi K."/>
        </authorList>
    </citation>
    <scope>NUCLEOTIDE SEQUENCE [LARGE SCALE GENOMIC DNA]</scope>
    <source>
        <strain>SB155-2</strain>
    </source>
</reference>
<accession>A6Q167</accession>
<feature type="chain" id="PRO_1000004548" description="Translation initiation factor IF-3">
    <location>
        <begin position="1"/>
        <end position="177"/>
    </location>
</feature>
<keyword id="KW-0963">Cytoplasm</keyword>
<keyword id="KW-0396">Initiation factor</keyword>
<keyword id="KW-0648">Protein biosynthesis</keyword>
<keyword id="KW-1185">Reference proteome</keyword>
<proteinExistence type="inferred from homology"/>
<dbReference type="EMBL" id="AP009178">
    <property type="protein sequence ID" value="BAF69226.1"/>
    <property type="molecule type" value="Genomic_DNA"/>
</dbReference>
<dbReference type="RefSeq" id="WP_011979652.1">
    <property type="nucleotide sequence ID" value="NC_009662.1"/>
</dbReference>
<dbReference type="SMR" id="A6Q167"/>
<dbReference type="FunCoup" id="A6Q167">
    <property type="interactions" value="478"/>
</dbReference>
<dbReference type="STRING" id="387092.NIS_0109"/>
<dbReference type="KEGG" id="nis:NIS_0109"/>
<dbReference type="eggNOG" id="COG0290">
    <property type="taxonomic scope" value="Bacteria"/>
</dbReference>
<dbReference type="HOGENOM" id="CLU_054919_3_2_7"/>
<dbReference type="InParanoid" id="A6Q167"/>
<dbReference type="OrthoDB" id="9806014at2"/>
<dbReference type="Proteomes" id="UP000001118">
    <property type="component" value="Chromosome"/>
</dbReference>
<dbReference type="GO" id="GO:0005829">
    <property type="term" value="C:cytosol"/>
    <property type="evidence" value="ECO:0007669"/>
    <property type="project" value="TreeGrafter"/>
</dbReference>
<dbReference type="GO" id="GO:0016020">
    <property type="term" value="C:membrane"/>
    <property type="evidence" value="ECO:0007669"/>
    <property type="project" value="TreeGrafter"/>
</dbReference>
<dbReference type="GO" id="GO:0043022">
    <property type="term" value="F:ribosome binding"/>
    <property type="evidence" value="ECO:0007669"/>
    <property type="project" value="TreeGrafter"/>
</dbReference>
<dbReference type="GO" id="GO:0003743">
    <property type="term" value="F:translation initiation factor activity"/>
    <property type="evidence" value="ECO:0007669"/>
    <property type="project" value="UniProtKB-UniRule"/>
</dbReference>
<dbReference type="GO" id="GO:0032790">
    <property type="term" value="P:ribosome disassembly"/>
    <property type="evidence" value="ECO:0007669"/>
    <property type="project" value="TreeGrafter"/>
</dbReference>
<dbReference type="FunFam" id="3.10.20.80:FF:000001">
    <property type="entry name" value="Translation initiation factor IF-3"/>
    <property type="match status" value="1"/>
</dbReference>
<dbReference type="FunFam" id="3.30.110.10:FF:000001">
    <property type="entry name" value="Translation initiation factor IF-3"/>
    <property type="match status" value="1"/>
</dbReference>
<dbReference type="Gene3D" id="3.30.110.10">
    <property type="entry name" value="Translation initiation factor 3 (IF-3), C-terminal domain"/>
    <property type="match status" value="1"/>
</dbReference>
<dbReference type="Gene3D" id="3.10.20.80">
    <property type="entry name" value="Translation initiation factor 3 (IF-3), N-terminal domain"/>
    <property type="match status" value="1"/>
</dbReference>
<dbReference type="HAMAP" id="MF_00080">
    <property type="entry name" value="IF_3"/>
    <property type="match status" value="1"/>
</dbReference>
<dbReference type="InterPro" id="IPR036788">
    <property type="entry name" value="T_IF-3_C_sf"/>
</dbReference>
<dbReference type="InterPro" id="IPR036787">
    <property type="entry name" value="T_IF-3_N_sf"/>
</dbReference>
<dbReference type="InterPro" id="IPR019813">
    <property type="entry name" value="Translation_initiation_fac3_CS"/>
</dbReference>
<dbReference type="InterPro" id="IPR001288">
    <property type="entry name" value="Translation_initiation_fac_3"/>
</dbReference>
<dbReference type="InterPro" id="IPR019815">
    <property type="entry name" value="Translation_initiation_fac_3_C"/>
</dbReference>
<dbReference type="InterPro" id="IPR019814">
    <property type="entry name" value="Translation_initiation_fac_3_N"/>
</dbReference>
<dbReference type="NCBIfam" id="TIGR00168">
    <property type="entry name" value="infC"/>
    <property type="match status" value="1"/>
</dbReference>
<dbReference type="PANTHER" id="PTHR10938">
    <property type="entry name" value="TRANSLATION INITIATION FACTOR IF-3"/>
    <property type="match status" value="1"/>
</dbReference>
<dbReference type="PANTHER" id="PTHR10938:SF0">
    <property type="entry name" value="TRANSLATION INITIATION FACTOR IF-3, MITOCHONDRIAL"/>
    <property type="match status" value="1"/>
</dbReference>
<dbReference type="Pfam" id="PF00707">
    <property type="entry name" value="IF3_C"/>
    <property type="match status" value="1"/>
</dbReference>
<dbReference type="Pfam" id="PF05198">
    <property type="entry name" value="IF3_N"/>
    <property type="match status" value="1"/>
</dbReference>
<dbReference type="SUPFAM" id="SSF55200">
    <property type="entry name" value="Translation initiation factor IF3, C-terminal domain"/>
    <property type="match status" value="1"/>
</dbReference>
<dbReference type="SUPFAM" id="SSF54364">
    <property type="entry name" value="Translation initiation factor IF3, N-terminal domain"/>
    <property type="match status" value="1"/>
</dbReference>
<dbReference type="PROSITE" id="PS00938">
    <property type="entry name" value="IF3"/>
    <property type="match status" value="1"/>
</dbReference>
<sequence>MSKKKDQVLLNEQIDAPEVRCVGDDGTQYGIVSRDEALKIAEQKGLDLVLIAPNANPPVCKIMDYGKFKYQQEKKLKEAKKKQTKIEVKEIKLSVKIAQNDIDYKVKHAREFLEKGKHVKFRVFLRGREMAHPEAGVEVLEKIIPLIEDIGVVEKKPHLEGRYVNMLVIPKKEEKKK</sequence>
<protein>
    <recommendedName>
        <fullName evidence="1">Translation initiation factor IF-3</fullName>
    </recommendedName>
</protein>
<gene>
    <name evidence="1" type="primary">infC</name>
    <name type="ordered locus">NIS_0109</name>
</gene>